<comment type="function">
    <text evidence="1">Plays an essential role in the initiation and regulation of chromosomal replication. ATP-DnaA binds to the origin of replication (oriC) to initiate formation of the DNA replication initiation complex once per cell cycle. Binds the DnaA box (a 9 base pair repeat at the origin) and separates the double-stranded (ds)DNA. Forms a right-handed helical filament on oriC DNA; dsDNA binds to the exterior of the filament while single-stranded (ss)DNA is stabiized in the filament's interior. The ATP-DnaA-oriC complex binds and stabilizes one strand of the AT-rich DNA unwinding element (DUE), permitting loading of DNA polymerase. After initiation quickly degrades to an ADP-DnaA complex that is not apt for DNA replication. Binds acidic phospholipids.</text>
</comment>
<comment type="subunit">
    <text evidence="1">Oligomerizes as a right-handed, spiral filament on DNA at oriC.</text>
</comment>
<comment type="subcellular location">
    <subcellularLocation>
        <location evidence="1">Cytoplasm</location>
    </subcellularLocation>
</comment>
<comment type="domain">
    <text evidence="1">Domain I is involved in oligomerization and binding regulators, domain II is flexibile and of varying length in different bacteria, domain III forms the AAA+ region, while domain IV binds dsDNA.</text>
</comment>
<comment type="similarity">
    <text evidence="1">Belongs to the DnaA family.</text>
</comment>
<gene>
    <name evidence="1" type="primary">dnaA</name>
    <name type="ordered locus">UTI89_C4252</name>
</gene>
<organism>
    <name type="scientific">Escherichia coli (strain UTI89 / UPEC)</name>
    <dbReference type="NCBI Taxonomy" id="364106"/>
    <lineage>
        <taxon>Bacteria</taxon>
        <taxon>Pseudomonadati</taxon>
        <taxon>Pseudomonadota</taxon>
        <taxon>Gammaproteobacteria</taxon>
        <taxon>Enterobacterales</taxon>
        <taxon>Enterobacteriaceae</taxon>
        <taxon>Escherichia</taxon>
    </lineage>
</organism>
<reference key="1">
    <citation type="journal article" date="2006" name="Proc. Natl. Acad. Sci. U.S.A.">
        <title>Identification of genes subject to positive selection in uropathogenic strains of Escherichia coli: a comparative genomics approach.</title>
        <authorList>
            <person name="Chen S.L."/>
            <person name="Hung C.-S."/>
            <person name="Xu J."/>
            <person name="Reigstad C.S."/>
            <person name="Magrini V."/>
            <person name="Sabo A."/>
            <person name="Blasiar D."/>
            <person name="Bieri T."/>
            <person name="Meyer R.R."/>
            <person name="Ozersky P."/>
            <person name="Armstrong J.R."/>
            <person name="Fulton R.S."/>
            <person name="Latreille J.P."/>
            <person name="Spieth J."/>
            <person name="Hooton T.M."/>
            <person name="Mardis E.R."/>
            <person name="Hultgren S.J."/>
            <person name="Gordon J.I."/>
        </authorList>
    </citation>
    <scope>NUCLEOTIDE SEQUENCE [LARGE SCALE GENOMIC DNA]</scope>
    <source>
        <strain>UTI89 / UPEC</strain>
    </source>
</reference>
<dbReference type="EMBL" id="CP000243">
    <property type="protein sequence ID" value="ABE09679.1"/>
    <property type="molecule type" value="Genomic_DNA"/>
</dbReference>
<dbReference type="RefSeq" id="WP_000059111.1">
    <property type="nucleotide sequence ID" value="NZ_CP064825.1"/>
</dbReference>
<dbReference type="SMR" id="Q1R4N5"/>
<dbReference type="GeneID" id="93778443"/>
<dbReference type="KEGG" id="eci:UTI89_C4252"/>
<dbReference type="HOGENOM" id="CLU_026910_0_1_6"/>
<dbReference type="Proteomes" id="UP000001952">
    <property type="component" value="Chromosome"/>
</dbReference>
<dbReference type="GO" id="GO:0005737">
    <property type="term" value="C:cytoplasm"/>
    <property type="evidence" value="ECO:0007669"/>
    <property type="project" value="UniProtKB-SubCell"/>
</dbReference>
<dbReference type="GO" id="GO:0005886">
    <property type="term" value="C:plasma membrane"/>
    <property type="evidence" value="ECO:0007669"/>
    <property type="project" value="TreeGrafter"/>
</dbReference>
<dbReference type="GO" id="GO:0005524">
    <property type="term" value="F:ATP binding"/>
    <property type="evidence" value="ECO:0007669"/>
    <property type="project" value="UniProtKB-UniRule"/>
</dbReference>
<dbReference type="GO" id="GO:0016887">
    <property type="term" value="F:ATP hydrolysis activity"/>
    <property type="evidence" value="ECO:0007669"/>
    <property type="project" value="InterPro"/>
</dbReference>
<dbReference type="GO" id="GO:0003688">
    <property type="term" value="F:DNA replication origin binding"/>
    <property type="evidence" value="ECO:0007669"/>
    <property type="project" value="UniProtKB-UniRule"/>
</dbReference>
<dbReference type="GO" id="GO:0008289">
    <property type="term" value="F:lipid binding"/>
    <property type="evidence" value="ECO:0007669"/>
    <property type="project" value="UniProtKB-KW"/>
</dbReference>
<dbReference type="GO" id="GO:0006270">
    <property type="term" value="P:DNA replication initiation"/>
    <property type="evidence" value="ECO:0007669"/>
    <property type="project" value="UniProtKB-UniRule"/>
</dbReference>
<dbReference type="GO" id="GO:0006275">
    <property type="term" value="P:regulation of DNA replication"/>
    <property type="evidence" value="ECO:0007669"/>
    <property type="project" value="UniProtKB-UniRule"/>
</dbReference>
<dbReference type="CDD" id="cd00009">
    <property type="entry name" value="AAA"/>
    <property type="match status" value="1"/>
</dbReference>
<dbReference type="CDD" id="cd06571">
    <property type="entry name" value="Bac_DnaA_C"/>
    <property type="match status" value="1"/>
</dbReference>
<dbReference type="FunFam" id="1.10.1750.10:FF:000001">
    <property type="entry name" value="Chromosomal replication initiator protein DnaA"/>
    <property type="match status" value="1"/>
</dbReference>
<dbReference type="FunFam" id="1.10.8.60:FF:000003">
    <property type="entry name" value="Chromosomal replication initiator protein DnaA"/>
    <property type="match status" value="1"/>
</dbReference>
<dbReference type="FunFam" id="3.30.300.180:FF:000001">
    <property type="entry name" value="Chromosomal replication initiator protein DnaA"/>
    <property type="match status" value="1"/>
</dbReference>
<dbReference type="FunFam" id="3.40.50.300:FF:000103">
    <property type="entry name" value="Chromosomal replication initiator protein DnaA"/>
    <property type="match status" value="1"/>
</dbReference>
<dbReference type="Gene3D" id="1.10.1750.10">
    <property type="match status" value="1"/>
</dbReference>
<dbReference type="Gene3D" id="1.10.8.60">
    <property type="match status" value="1"/>
</dbReference>
<dbReference type="Gene3D" id="3.30.300.180">
    <property type="match status" value="1"/>
</dbReference>
<dbReference type="Gene3D" id="3.40.50.300">
    <property type="entry name" value="P-loop containing nucleotide triphosphate hydrolases"/>
    <property type="match status" value="1"/>
</dbReference>
<dbReference type="HAMAP" id="MF_00377">
    <property type="entry name" value="DnaA_bact"/>
    <property type="match status" value="1"/>
</dbReference>
<dbReference type="InterPro" id="IPR003593">
    <property type="entry name" value="AAA+_ATPase"/>
</dbReference>
<dbReference type="InterPro" id="IPR001957">
    <property type="entry name" value="Chromosome_initiator_DnaA"/>
</dbReference>
<dbReference type="InterPro" id="IPR020591">
    <property type="entry name" value="Chromosome_initiator_DnaA-like"/>
</dbReference>
<dbReference type="InterPro" id="IPR018312">
    <property type="entry name" value="Chromosome_initiator_DnaA_CS"/>
</dbReference>
<dbReference type="InterPro" id="IPR013159">
    <property type="entry name" value="DnaA_C"/>
</dbReference>
<dbReference type="InterPro" id="IPR013317">
    <property type="entry name" value="DnaA_dom"/>
</dbReference>
<dbReference type="InterPro" id="IPR024633">
    <property type="entry name" value="DnaA_N_dom"/>
</dbReference>
<dbReference type="InterPro" id="IPR038454">
    <property type="entry name" value="DnaA_N_sf"/>
</dbReference>
<dbReference type="InterPro" id="IPR027417">
    <property type="entry name" value="P-loop_NTPase"/>
</dbReference>
<dbReference type="InterPro" id="IPR010921">
    <property type="entry name" value="Trp_repressor/repl_initiator"/>
</dbReference>
<dbReference type="NCBIfam" id="TIGR00362">
    <property type="entry name" value="DnaA"/>
    <property type="match status" value="1"/>
</dbReference>
<dbReference type="PANTHER" id="PTHR30050">
    <property type="entry name" value="CHROMOSOMAL REPLICATION INITIATOR PROTEIN DNAA"/>
    <property type="match status" value="1"/>
</dbReference>
<dbReference type="PANTHER" id="PTHR30050:SF2">
    <property type="entry name" value="CHROMOSOMAL REPLICATION INITIATOR PROTEIN DNAA"/>
    <property type="match status" value="1"/>
</dbReference>
<dbReference type="Pfam" id="PF00308">
    <property type="entry name" value="Bac_DnaA"/>
    <property type="match status" value="1"/>
</dbReference>
<dbReference type="Pfam" id="PF08299">
    <property type="entry name" value="Bac_DnaA_C"/>
    <property type="match status" value="1"/>
</dbReference>
<dbReference type="Pfam" id="PF11638">
    <property type="entry name" value="DnaA_N"/>
    <property type="match status" value="1"/>
</dbReference>
<dbReference type="PRINTS" id="PR00051">
    <property type="entry name" value="DNAA"/>
</dbReference>
<dbReference type="SMART" id="SM00382">
    <property type="entry name" value="AAA"/>
    <property type="match status" value="1"/>
</dbReference>
<dbReference type="SMART" id="SM00760">
    <property type="entry name" value="Bac_DnaA_C"/>
    <property type="match status" value="1"/>
</dbReference>
<dbReference type="SUPFAM" id="SSF52540">
    <property type="entry name" value="P-loop containing nucleoside triphosphate hydrolases"/>
    <property type="match status" value="1"/>
</dbReference>
<dbReference type="SUPFAM" id="SSF48295">
    <property type="entry name" value="TrpR-like"/>
    <property type="match status" value="1"/>
</dbReference>
<dbReference type="PROSITE" id="PS01008">
    <property type="entry name" value="DNAA"/>
    <property type="match status" value="1"/>
</dbReference>
<name>DNAA_ECOUT</name>
<keyword id="KW-0067">ATP-binding</keyword>
<keyword id="KW-0963">Cytoplasm</keyword>
<keyword id="KW-0235">DNA replication</keyword>
<keyword id="KW-0238">DNA-binding</keyword>
<keyword id="KW-0446">Lipid-binding</keyword>
<keyword id="KW-0547">Nucleotide-binding</keyword>
<feature type="chain" id="PRO_1000048642" description="Chromosomal replication initiator protein DnaA">
    <location>
        <begin position="1"/>
        <end position="467"/>
    </location>
</feature>
<feature type="region of interest" description="Domain I, interacts with DnaA modulators" evidence="1">
    <location>
        <begin position="1"/>
        <end position="90"/>
    </location>
</feature>
<feature type="region of interest" description="Domain II" evidence="1">
    <location>
        <begin position="91"/>
        <end position="130"/>
    </location>
</feature>
<feature type="region of interest" description="Disordered" evidence="2">
    <location>
        <begin position="98"/>
        <end position="119"/>
    </location>
</feature>
<feature type="region of interest" description="Domain III, AAA+ region" evidence="1">
    <location>
        <begin position="131"/>
        <end position="347"/>
    </location>
</feature>
<feature type="region of interest" description="Domain IV, binds dsDNA" evidence="1">
    <location>
        <begin position="348"/>
        <end position="467"/>
    </location>
</feature>
<feature type="compositionally biased region" description="Low complexity" evidence="2">
    <location>
        <begin position="98"/>
        <end position="111"/>
    </location>
</feature>
<feature type="binding site" evidence="1">
    <location>
        <position position="175"/>
    </location>
    <ligand>
        <name>ATP</name>
        <dbReference type="ChEBI" id="CHEBI:30616"/>
    </ligand>
</feature>
<feature type="binding site" evidence="1">
    <location>
        <position position="177"/>
    </location>
    <ligand>
        <name>ATP</name>
        <dbReference type="ChEBI" id="CHEBI:30616"/>
    </ligand>
</feature>
<feature type="binding site" evidence="1">
    <location>
        <position position="178"/>
    </location>
    <ligand>
        <name>ATP</name>
        <dbReference type="ChEBI" id="CHEBI:30616"/>
    </ligand>
</feature>
<feature type="binding site" evidence="1">
    <location>
        <position position="179"/>
    </location>
    <ligand>
        <name>ATP</name>
        <dbReference type="ChEBI" id="CHEBI:30616"/>
    </ligand>
</feature>
<proteinExistence type="inferred from homology"/>
<accession>Q1R4N5</accession>
<protein>
    <recommendedName>
        <fullName evidence="1">Chromosomal replication initiator protein DnaA</fullName>
    </recommendedName>
</protein>
<evidence type="ECO:0000255" key="1">
    <source>
        <dbReference type="HAMAP-Rule" id="MF_00377"/>
    </source>
</evidence>
<evidence type="ECO:0000256" key="2">
    <source>
        <dbReference type="SAM" id="MobiDB-lite"/>
    </source>
</evidence>
<sequence length="467" mass="52551">MSLSLWQQCLARLQDELPATEFSMWIRPLQAELSDNTLALYAPNRFVLDWVRDKYLNNINGLLTSFCGADAPQLRFEVGTKPVTQTPQAAVTSNVAAPAQVAQTQPQRAAPSTRSGWDNVPAPAEPTYRSNVNVKHTFDNFVEGKSNQLARAAARQVADNPGGAYNPLFLYGGTGLGKTHLLHAVGNGIMARKPNAKVVYMHSERFVQDMVKALQNNAIEEFKRYYRSVDALLIDDIQFFANKERSQEEFFHTFNALLEGNQQIILTSDRYPKEINGVEDRLKSRFGWGLTVAIEPPELETRVAILMKKADENDIRLPGEVAFFIAKRLRSNVRELEGALNRVIANANFTGRAITIDFVREALRDLLALQEKLVTIDNIQKTVAEYYKIKVADLLSKRRSRSVARPRQMAMALAKELTNHSLPEIGDAFGGRDHTTVLHACRKIEQLREESHDIKEDFSNLIRTLSS</sequence>